<evidence type="ECO:0000250" key="1"/>
<evidence type="ECO:0000250" key="2">
    <source>
        <dbReference type="UniProtKB" id="P00157"/>
    </source>
</evidence>
<evidence type="ECO:0000255" key="3">
    <source>
        <dbReference type="PROSITE-ProRule" id="PRU00967"/>
    </source>
</evidence>
<evidence type="ECO:0000255" key="4">
    <source>
        <dbReference type="PROSITE-ProRule" id="PRU00968"/>
    </source>
</evidence>
<geneLocation type="mitochondrion"/>
<keyword id="KW-0249">Electron transport</keyword>
<keyword id="KW-0349">Heme</keyword>
<keyword id="KW-0408">Iron</keyword>
<keyword id="KW-0472">Membrane</keyword>
<keyword id="KW-0479">Metal-binding</keyword>
<keyword id="KW-0496">Mitochondrion</keyword>
<keyword id="KW-0999">Mitochondrion inner membrane</keyword>
<keyword id="KW-0679">Respiratory chain</keyword>
<keyword id="KW-0812">Transmembrane</keyword>
<keyword id="KW-1133">Transmembrane helix</keyword>
<keyword id="KW-0813">Transport</keyword>
<keyword id="KW-0830">Ubiquinone</keyword>
<gene>
    <name type="primary">MT-CYB</name>
    <name type="synonym">COB</name>
    <name type="synonym">CYTB</name>
    <name type="synonym">MTCYB</name>
</gene>
<accession>O79206</accession>
<feature type="chain" id="PRO_0000061049" description="Cytochrome b">
    <location>
        <begin position="1"/>
        <end position="380"/>
    </location>
</feature>
<feature type="transmembrane region" description="Helical" evidence="2">
    <location>
        <begin position="34"/>
        <end position="54"/>
    </location>
</feature>
<feature type="transmembrane region" description="Helical" evidence="2">
    <location>
        <begin position="78"/>
        <end position="99"/>
    </location>
</feature>
<feature type="transmembrane region" description="Helical" evidence="2">
    <location>
        <begin position="114"/>
        <end position="134"/>
    </location>
</feature>
<feature type="transmembrane region" description="Helical" evidence="2">
    <location>
        <begin position="179"/>
        <end position="199"/>
    </location>
</feature>
<feature type="transmembrane region" description="Helical" evidence="2">
    <location>
        <begin position="227"/>
        <end position="247"/>
    </location>
</feature>
<feature type="transmembrane region" description="Helical" evidence="2">
    <location>
        <begin position="289"/>
        <end position="309"/>
    </location>
</feature>
<feature type="transmembrane region" description="Helical" evidence="2">
    <location>
        <begin position="321"/>
        <end position="341"/>
    </location>
</feature>
<feature type="transmembrane region" description="Helical" evidence="2">
    <location>
        <begin position="348"/>
        <end position="368"/>
    </location>
</feature>
<feature type="binding site" description="axial binding residue" evidence="2">
    <location>
        <position position="84"/>
    </location>
    <ligand>
        <name>heme b</name>
        <dbReference type="ChEBI" id="CHEBI:60344"/>
        <label>b562</label>
    </ligand>
    <ligandPart>
        <name>Fe</name>
        <dbReference type="ChEBI" id="CHEBI:18248"/>
    </ligandPart>
</feature>
<feature type="binding site" description="axial binding residue" evidence="2">
    <location>
        <position position="98"/>
    </location>
    <ligand>
        <name>heme b</name>
        <dbReference type="ChEBI" id="CHEBI:60344"/>
        <label>b566</label>
    </ligand>
    <ligandPart>
        <name>Fe</name>
        <dbReference type="ChEBI" id="CHEBI:18248"/>
    </ligandPart>
</feature>
<feature type="binding site" description="axial binding residue" evidence="2">
    <location>
        <position position="183"/>
    </location>
    <ligand>
        <name>heme b</name>
        <dbReference type="ChEBI" id="CHEBI:60344"/>
        <label>b562</label>
    </ligand>
    <ligandPart>
        <name>Fe</name>
        <dbReference type="ChEBI" id="CHEBI:18248"/>
    </ligandPart>
</feature>
<feature type="binding site" description="axial binding residue" evidence="2">
    <location>
        <position position="197"/>
    </location>
    <ligand>
        <name>heme b</name>
        <dbReference type="ChEBI" id="CHEBI:60344"/>
        <label>b566</label>
    </ligand>
    <ligandPart>
        <name>Fe</name>
        <dbReference type="ChEBI" id="CHEBI:18248"/>
    </ligandPart>
</feature>
<feature type="binding site" evidence="2">
    <location>
        <position position="202"/>
    </location>
    <ligand>
        <name>a ubiquinone</name>
        <dbReference type="ChEBI" id="CHEBI:16389"/>
    </ligand>
</feature>
<proteinExistence type="inferred from homology"/>
<comment type="function">
    <text evidence="2">Component of the ubiquinol-cytochrome c reductase complex (complex III or cytochrome b-c1 complex) that is part of the mitochondrial respiratory chain. The b-c1 complex mediates electron transfer from ubiquinol to cytochrome c. Contributes to the generation of a proton gradient across the mitochondrial membrane that is then used for ATP synthesis.</text>
</comment>
<comment type="cofactor">
    <cofactor evidence="2">
        <name>heme b</name>
        <dbReference type="ChEBI" id="CHEBI:60344"/>
    </cofactor>
    <text evidence="2">Binds 2 heme b groups non-covalently.</text>
</comment>
<comment type="subunit">
    <text evidence="2">The cytochrome bc1 complex contains 11 subunits: 3 respiratory subunits (MT-CYB, CYC1 and UQCRFS1), 2 core proteins (UQCRC1 and UQCRC2) and 6 low-molecular weight proteins (UQCRH/QCR6, UQCRB/QCR7, UQCRQ/QCR8, UQCR10/QCR9, UQCR11/QCR10 and a cleavage product of UQCRFS1). This cytochrome bc1 complex then forms a dimer.</text>
</comment>
<comment type="subcellular location">
    <subcellularLocation>
        <location evidence="2">Mitochondrion inner membrane</location>
        <topology evidence="2">Multi-pass membrane protein</topology>
    </subcellularLocation>
</comment>
<comment type="miscellaneous">
    <text evidence="1">Heme 1 (or BL or b562) is low-potential and absorbs at about 562 nm, and heme 2 (or BH or b566) is high-potential and absorbs at about 566 nm.</text>
</comment>
<comment type="similarity">
    <text evidence="3 4">Belongs to the cytochrome b family.</text>
</comment>
<comment type="caution">
    <text evidence="2">The full-length protein contains only eight transmembrane helices, not nine as predicted by bioinformatics tools.</text>
</comment>
<protein>
    <recommendedName>
        <fullName>Cytochrome b</fullName>
    </recommendedName>
    <alternativeName>
        <fullName>Complex III subunit 3</fullName>
    </alternativeName>
    <alternativeName>
        <fullName>Complex III subunit III</fullName>
    </alternativeName>
    <alternativeName>
        <fullName>Cytochrome b-c1 complex subunit 3</fullName>
    </alternativeName>
    <alternativeName>
        <fullName>Ubiquinol-cytochrome-c reductase complex cytochrome b subunit</fullName>
    </alternativeName>
</protein>
<reference key="1">
    <citation type="journal article" date="1998" name="Mol. Biol. Evol.">
        <title>Body size effects and rates of cytochrome-b evolution in tube-nosed seabirds.</title>
        <authorList>
            <person name="Nunn G.B."/>
            <person name="Stanley S.E."/>
        </authorList>
    </citation>
    <scope>NUCLEOTIDE SEQUENCE [GENOMIC DNA]</scope>
    <source>
        <strain>Isolate Hydro</strain>
    </source>
</reference>
<sequence length="380" mass="42598">MAPNPRKSHPLLKMVNNSLIDLPTPSNISAWWNFGSLLALCLMTQILTGLLLAMHYTADTTLAFSSVAHTCRNVQYGWLIRNMHANGASFFFICIYMHIGRGFYYGSYLHKETWNTGILLLLTLMATAFVGYVLPWGQMSFWGATVITNMFSAIPYIGQTIVEWAWGGFSVDNPTLTRFFALHFLLPFMIAGLTLIHLTFLHESGSNNPLGIVSNCDKIPFHPYYSLKDILGLTLLLLPLTTMALFSPNLLGDPENFTPANPLVTPPHIKPEWYFLFAYAILRSIPNKLGGVLALAASVLVLFLSPLLHKSKQRTMAFRPLSQLLFWTLVANLLILTWIGSQPVEHPFIIIGQLASTTYFIILLILFPITSALENKMLNF</sequence>
<dbReference type="EMBL" id="AF076059">
    <property type="protein sequence ID" value="AAC68616.1"/>
    <property type="molecule type" value="Genomic_DNA"/>
</dbReference>
<dbReference type="SMR" id="O79206"/>
<dbReference type="GO" id="GO:0005743">
    <property type="term" value="C:mitochondrial inner membrane"/>
    <property type="evidence" value="ECO:0007669"/>
    <property type="project" value="UniProtKB-SubCell"/>
</dbReference>
<dbReference type="GO" id="GO:0045275">
    <property type="term" value="C:respiratory chain complex III"/>
    <property type="evidence" value="ECO:0007669"/>
    <property type="project" value="InterPro"/>
</dbReference>
<dbReference type="GO" id="GO:0046872">
    <property type="term" value="F:metal ion binding"/>
    <property type="evidence" value="ECO:0007669"/>
    <property type="project" value="UniProtKB-KW"/>
</dbReference>
<dbReference type="GO" id="GO:0008121">
    <property type="term" value="F:ubiquinol-cytochrome-c reductase activity"/>
    <property type="evidence" value="ECO:0007669"/>
    <property type="project" value="InterPro"/>
</dbReference>
<dbReference type="GO" id="GO:0006122">
    <property type="term" value="P:mitochondrial electron transport, ubiquinol to cytochrome c"/>
    <property type="evidence" value="ECO:0007669"/>
    <property type="project" value="TreeGrafter"/>
</dbReference>
<dbReference type="CDD" id="cd00290">
    <property type="entry name" value="cytochrome_b_C"/>
    <property type="match status" value="1"/>
</dbReference>
<dbReference type="CDD" id="cd00284">
    <property type="entry name" value="Cytochrome_b_N"/>
    <property type="match status" value="1"/>
</dbReference>
<dbReference type="FunFam" id="1.20.810.10:FF:000002">
    <property type="entry name" value="Cytochrome b"/>
    <property type="match status" value="1"/>
</dbReference>
<dbReference type="Gene3D" id="1.20.810.10">
    <property type="entry name" value="Cytochrome Bc1 Complex, Chain C"/>
    <property type="match status" value="1"/>
</dbReference>
<dbReference type="InterPro" id="IPR005798">
    <property type="entry name" value="Cyt_b/b6_C"/>
</dbReference>
<dbReference type="InterPro" id="IPR036150">
    <property type="entry name" value="Cyt_b/b6_C_sf"/>
</dbReference>
<dbReference type="InterPro" id="IPR005797">
    <property type="entry name" value="Cyt_b/b6_N"/>
</dbReference>
<dbReference type="InterPro" id="IPR027387">
    <property type="entry name" value="Cytb/b6-like_sf"/>
</dbReference>
<dbReference type="InterPro" id="IPR030689">
    <property type="entry name" value="Cytochrome_b"/>
</dbReference>
<dbReference type="InterPro" id="IPR048260">
    <property type="entry name" value="Cytochrome_b_C_euk/bac"/>
</dbReference>
<dbReference type="InterPro" id="IPR048259">
    <property type="entry name" value="Cytochrome_b_N_euk/bac"/>
</dbReference>
<dbReference type="InterPro" id="IPR016174">
    <property type="entry name" value="Di-haem_cyt_TM"/>
</dbReference>
<dbReference type="PANTHER" id="PTHR19271">
    <property type="entry name" value="CYTOCHROME B"/>
    <property type="match status" value="1"/>
</dbReference>
<dbReference type="PANTHER" id="PTHR19271:SF16">
    <property type="entry name" value="CYTOCHROME B"/>
    <property type="match status" value="1"/>
</dbReference>
<dbReference type="Pfam" id="PF00032">
    <property type="entry name" value="Cytochrom_B_C"/>
    <property type="match status" value="1"/>
</dbReference>
<dbReference type="Pfam" id="PF00033">
    <property type="entry name" value="Cytochrome_B"/>
    <property type="match status" value="1"/>
</dbReference>
<dbReference type="PIRSF" id="PIRSF038885">
    <property type="entry name" value="COB"/>
    <property type="match status" value="1"/>
</dbReference>
<dbReference type="SUPFAM" id="SSF81648">
    <property type="entry name" value="a domain/subunit of cytochrome bc1 complex (Ubiquinol-cytochrome c reductase)"/>
    <property type="match status" value="1"/>
</dbReference>
<dbReference type="SUPFAM" id="SSF81342">
    <property type="entry name" value="Transmembrane di-heme cytochromes"/>
    <property type="match status" value="1"/>
</dbReference>
<dbReference type="PROSITE" id="PS51003">
    <property type="entry name" value="CYTB_CTER"/>
    <property type="match status" value="1"/>
</dbReference>
<dbReference type="PROSITE" id="PS51002">
    <property type="entry name" value="CYTB_NTER"/>
    <property type="match status" value="1"/>
</dbReference>
<name>CYB_HYDPE</name>
<organism>
    <name type="scientific">Hydrobates pelagicus</name>
    <name type="common">European storm-petrel</name>
    <dbReference type="NCBI Taxonomy" id="79651"/>
    <lineage>
        <taxon>Eukaryota</taxon>
        <taxon>Metazoa</taxon>
        <taxon>Chordata</taxon>
        <taxon>Craniata</taxon>
        <taxon>Vertebrata</taxon>
        <taxon>Euteleostomi</taxon>
        <taxon>Archelosauria</taxon>
        <taxon>Archosauria</taxon>
        <taxon>Dinosauria</taxon>
        <taxon>Saurischia</taxon>
        <taxon>Theropoda</taxon>
        <taxon>Coelurosauria</taxon>
        <taxon>Aves</taxon>
        <taxon>Neognathae</taxon>
        <taxon>Neoaves</taxon>
        <taxon>Aequornithes</taxon>
        <taxon>Procellariiformes</taxon>
        <taxon>Hydrobatidae</taxon>
        <taxon>Hydrobates</taxon>
    </lineage>
</organism>